<comment type="similarity">
    <text evidence="1">Belongs to the UPF0253 family.</text>
</comment>
<sequence length="67" mass="7459">MKVYECCELIRKTYAQIGGGDLGYIPNAIHCAVKTFDFIAANEELPKDVRERAAFAAANLLMSDFED</sequence>
<gene>
    <name type="ordered locus">PBPRA2947</name>
</gene>
<dbReference type="EMBL" id="CR378672">
    <property type="protein sequence ID" value="CAG21281.1"/>
    <property type="molecule type" value="Genomic_DNA"/>
</dbReference>
<dbReference type="RefSeq" id="WP_006232685.1">
    <property type="nucleotide sequence ID" value="NC_006370.1"/>
</dbReference>
<dbReference type="SMR" id="Q6LN45"/>
<dbReference type="STRING" id="298386.PBPRA2947"/>
<dbReference type="KEGG" id="ppr:PBPRA2947"/>
<dbReference type="eggNOG" id="ENOG5032Z3X">
    <property type="taxonomic scope" value="Bacteria"/>
</dbReference>
<dbReference type="HOGENOM" id="CLU_190008_0_0_6"/>
<dbReference type="Proteomes" id="UP000000593">
    <property type="component" value="Chromosome 1"/>
</dbReference>
<dbReference type="HAMAP" id="MF_01064">
    <property type="entry name" value="UPF0253"/>
    <property type="match status" value="1"/>
</dbReference>
<dbReference type="InterPro" id="IPR009624">
    <property type="entry name" value="UPF0253"/>
</dbReference>
<dbReference type="NCBIfam" id="NF003436">
    <property type="entry name" value="PRK04964.1"/>
    <property type="match status" value="1"/>
</dbReference>
<dbReference type="Pfam" id="PF06786">
    <property type="entry name" value="UPF0253"/>
    <property type="match status" value="1"/>
</dbReference>
<reference key="1">
    <citation type="journal article" date="2005" name="Science">
        <title>Life at depth: Photobacterium profundum genome sequence and expression analysis.</title>
        <authorList>
            <person name="Vezzi A."/>
            <person name="Campanaro S."/>
            <person name="D'Angelo M."/>
            <person name="Simonato F."/>
            <person name="Vitulo N."/>
            <person name="Lauro F.M."/>
            <person name="Cestaro A."/>
            <person name="Malacrida G."/>
            <person name="Simionati B."/>
            <person name="Cannata N."/>
            <person name="Romualdi C."/>
            <person name="Bartlett D.H."/>
            <person name="Valle G."/>
        </authorList>
    </citation>
    <scope>NUCLEOTIDE SEQUENCE [LARGE SCALE GENOMIC DNA]</scope>
    <source>
        <strain>ATCC BAA-1253 / SS9</strain>
    </source>
</reference>
<name>Y2947_PHOPR</name>
<protein>
    <recommendedName>
        <fullName evidence="1">UPF0253 protein PBPRA2947</fullName>
    </recommendedName>
</protein>
<accession>Q6LN45</accession>
<keyword id="KW-1185">Reference proteome</keyword>
<feature type="chain" id="PRO_0000215542" description="UPF0253 protein PBPRA2947">
    <location>
        <begin position="1"/>
        <end position="67"/>
    </location>
</feature>
<evidence type="ECO:0000255" key="1">
    <source>
        <dbReference type="HAMAP-Rule" id="MF_01064"/>
    </source>
</evidence>
<organism>
    <name type="scientific">Photobacterium profundum (strain SS9)</name>
    <dbReference type="NCBI Taxonomy" id="298386"/>
    <lineage>
        <taxon>Bacteria</taxon>
        <taxon>Pseudomonadati</taxon>
        <taxon>Pseudomonadota</taxon>
        <taxon>Gammaproteobacteria</taxon>
        <taxon>Vibrionales</taxon>
        <taxon>Vibrionaceae</taxon>
        <taxon>Photobacterium</taxon>
    </lineage>
</organism>
<proteinExistence type="inferred from homology"/>